<comment type="interaction">
    <interactant intactId="EBI-12887458">
        <id>Q9BU79</id>
    </interactant>
    <interactant intactId="EBI-13059134">
        <id>Q13520</id>
        <label>AQP6</label>
    </interactant>
    <organismsDiffer>false</organismsDiffer>
    <experiments>3</experiments>
</comment>
<comment type="interaction">
    <interactant intactId="EBI-12887458">
        <id>Q9BU79</id>
    </interactant>
    <interactant intactId="EBI-700794">
        <id>Q13323</id>
        <label>BIK</label>
    </interactant>
    <organismsDiffer>false</organismsDiffer>
    <experiments>3</experiments>
</comment>
<comment type="interaction">
    <interactant intactId="EBI-12887458">
        <id>Q9BU79</id>
    </interactant>
    <interactant intactId="EBI-3906571">
        <id>P20138</id>
        <label>CD33</label>
    </interactant>
    <organismsDiffer>false</organismsDiffer>
    <experiments>3</experiments>
</comment>
<comment type="interaction">
    <interactant intactId="EBI-12887458">
        <id>Q9BU79</id>
    </interactant>
    <interactant intactId="EBI-12222807">
        <id>P04233-2</id>
        <label>CD74</label>
    </interactant>
    <organismsDiffer>false</organismsDiffer>
    <experiments>3</experiments>
</comment>
<comment type="interaction">
    <interactant intactId="EBI-12887458">
        <id>Q9BU79</id>
    </interactant>
    <interactant intactId="EBI-7797864">
        <id>P11912</id>
        <label>CD79A</label>
    </interactant>
    <organismsDiffer>false</organismsDiffer>
    <experiments>3</experiments>
</comment>
<comment type="interaction">
    <interactant intactId="EBI-12887458">
        <id>Q9BU79</id>
    </interactant>
    <interactant intactId="EBI-1045797">
        <id>Q8N5K1</id>
        <label>CISD2</label>
    </interactant>
    <organismsDiffer>false</organismsDiffer>
    <experiments>3</experiments>
</comment>
<comment type="interaction">
    <interactant intactId="EBI-12887458">
        <id>Q9BU79</id>
    </interactant>
    <interactant intactId="EBI-17710733">
        <id>Q86T13</id>
        <label>CLEC14A</label>
    </interactant>
    <organismsDiffer>false</organismsDiffer>
    <experiments>3</experiments>
</comment>
<comment type="interaction">
    <interactant intactId="EBI-12887458">
        <id>Q9BU79</id>
    </interactant>
    <interactant intactId="EBI-18013275">
        <id>Q7Z7G2</id>
        <label>CPLX4</label>
    </interactant>
    <organismsDiffer>false</organismsDiffer>
    <experiments>3</experiments>
</comment>
<comment type="interaction">
    <interactant intactId="EBI-12887458">
        <id>Q9BU79</id>
    </interactant>
    <interactant intactId="EBI-3915253">
        <id>Q15125</id>
        <label>EBP</label>
    </interactant>
    <organismsDiffer>false</organismsDiffer>
    <experiments>3</experiments>
</comment>
<comment type="interaction">
    <interactant intactId="EBI-12887458">
        <id>Q9BU79</id>
    </interactant>
    <interactant intactId="EBI-18535450">
        <id>Q9GZR5</id>
        <label>ELOVL4</label>
    </interactant>
    <organismsDiffer>false</organismsDiffer>
    <experiments>3</experiments>
</comment>
<comment type="interaction">
    <interactant intactId="EBI-12887458">
        <id>Q9BU79</id>
    </interactant>
    <interactant intactId="EBI-11037623">
        <id>Q9NYP7</id>
        <label>ELOVL5</label>
    </interactant>
    <organismsDiffer>false</organismsDiffer>
    <experiments>3</experiments>
</comment>
<comment type="interaction">
    <interactant intactId="EBI-12887458">
        <id>Q9BU79</id>
    </interactant>
    <interactant intactId="EBI-781551">
        <id>Q9Y282</id>
        <label>ERGIC3</label>
    </interactant>
    <organismsDiffer>false</organismsDiffer>
    <experiments>3</experiments>
</comment>
<comment type="interaction">
    <interactant intactId="EBI-12887458">
        <id>Q9BU79</id>
    </interactant>
    <interactant intactId="EBI-18636064">
        <id>Q8TBP5</id>
        <label>FAM174A</label>
    </interactant>
    <organismsDiffer>false</organismsDiffer>
    <experiments>3</experiments>
</comment>
<comment type="interaction">
    <interactant intactId="EBI-12887458">
        <id>Q9BU79</id>
    </interactant>
    <interactant intactId="EBI-18304435">
        <id>Q5JX71</id>
        <label>FAM209A</label>
    </interactant>
    <organismsDiffer>false</organismsDiffer>
    <experiments>3</experiments>
</comment>
<comment type="interaction">
    <interactant intactId="EBI-12887458">
        <id>Q9BU79</id>
    </interactant>
    <interactant intactId="EBI-17458373">
        <id>P48165</id>
        <label>GJA8</label>
    </interactant>
    <organismsDiffer>false</organismsDiffer>
    <experiments>3</experiments>
</comment>
<comment type="interaction">
    <interactant intactId="EBI-12887458">
        <id>Q9BU79</id>
    </interactant>
    <interactant intactId="EBI-11343451">
        <id>Q9NPR9</id>
        <label>GPR108</label>
    </interactant>
    <organismsDiffer>false</organismsDiffer>
    <experiments>3</experiments>
</comment>
<comment type="interaction">
    <interactant intactId="EBI-12887458">
        <id>Q9BU79</id>
    </interactant>
    <interactant intactId="EBI-13345167">
        <id>Q8TDT2</id>
        <label>GPR152</label>
    </interactant>
    <organismsDiffer>false</organismsDiffer>
    <experiments>3</experiments>
</comment>
<comment type="interaction">
    <interactant intactId="EBI-12887458">
        <id>Q9BU79</id>
    </interactant>
    <interactant intactId="EBI-2927498">
        <id>O60883</id>
        <label>GPR37L1</label>
    </interactant>
    <organismsDiffer>false</organismsDiffer>
    <experiments>3</experiments>
</comment>
<comment type="interaction">
    <interactant intactId="EBI-12887458">
        <id>Q9BU79</id>
    </interactant>
    <interactant intactId="EBI-11721746">
        <id>Q8TED1</id>
        <label>GPX8</label>
    </interactant>
    <organismsDiffer>false</organismsDiffer>
    <experiments>3</experiments>
</comment>
<comment type="interaction">
    <interactant intactId="EBI-12887458">
        <id>Q9BU79</id>
    </interactant>
    <interactant intactId="EBI-18053395">
        <id>Q7Z5P4</id>
        <label>HSD17B13</label>
    </interactant>
    <organismsDiffer>false</organismsDiffer>
    <experiments>3</experiments>
</comment>
<comment type="interaction">
    <interactant intactId="EBI-12887458">
        <id>Q9BU79</id>
    </interactant>
    <interactant intactId="EBI-10266796">
        <id>Q8N5M9</id>
        <label>JAGN1</label>
    </interactant>
    <organismsDiffer>false</organismsDiffer>
    <experiments>3</experiments>
</comment>
<comment type="interaction">
    <interactant intactId="EBI-12887458">
        <id>Q9BU79</id>
    </interactant>
    <interactant intactId="EBI-8632435">
        <id>P43628</id>
        <label>KIR2DL3</label>
    </interactant>
    <organismsDiffer>false</organismsDiffer>
    <experiments>3</experiments>
</comment>
<comment type="interaction">
    <interactant intactId="EBI-12887458">
        <id>Q9BU79</id>
    </interactant>
    <interactant intactId="EBI-2830566">
        <id>Q9H400</id>
        <label>LIME1</label>
    </interactant>
    <organismsDiffer>false</organismsDiffer>
    <experiments>3</experiments>
</comment>
<comment type="interaction">
    <interactant intactId="EBI-12887458">
        <id>Q9BU79</id>
    </interactant>
    <interactant intactId="EBI-2830349">
        <id>Q7Z4F1</id>
        <label>LRP10</label>
    </interactant>
    <organismsDiffer>false</organismsDiffer>
    <experiments>3</experiments>
</comment>
<comment type="interaction">
    <interactant intactId="EBI-12887458">
        <id>Q9BU79</id>
    </interactant>
    <interactant intactId="EBI-5454865">
        <id>Q6IN84</id>
        <label>MRM1</label>
    </interactant>
    <organismsDiffer>false</organismsDiffer>
    <experiments>3</experiments>
</comment>
<comment type="interaction">
    <interactant intactId="EBI-12887458">
        <id>Q9BU79</id>
    </interactant>
    <interactant intactId="EBI-3923617">
        <id>Q9H2K0</id>
        <label>MTIF3</label>
    </interactant>
    <organismsDiffer>false</organismsDiffer>
    <experiments>3</experiments>
</comment>
<comment type="interaction">
    <interactant intactId="EBI-12887458">
        <id>Q9BU79</id>
    </interactant>
    <interactant intactId="EBI-17263240">
        <id>P15941-11</id>
        <label>MUC1</label>
    </interactant>
    <organismsDiffer>false</organismsDiffer>
    <experiments>3</experiments>
</comment>
<comment type="interaction">
    <interactant intactId="EBI-12887458">
        <id>Q9BU79</id>
    </interactant>
    <interactant intactId="EBI-12188331">
        <id>P60201-2</id>
        <label>PLP1</label>
    </interactant>
    <organismsDiffer>false</organismsDiffer>
    <experiments>3</experiments>
</comment>
<comment type="interaction">
    <interactant intactId="EBI-12887458">
        <id>Q9BU79</id>
    </interactant>
    <interactant intactId="EBI-10192441">
        <id>Q86VR2</id>
        <label>RETREG3</label>
    </interactant>
    <organismsDiffer>false</organismsDiffer>
    <experiments>3</experiments>
</comment>
<comment type="interaction">
    <interactant intactId="EBI-12887458">
        <id>Q9BU79</id>
    </interactant>
    <interactant intactId="EBI-1056589">
        <id>Q96TC7</id>
        <label>RMDN3</label>
    </interactant>
    <organismsDiffer>false</organismsDiffer>
    <experiments>3</experiments>
</comment>
<comment type="interaction">
    <interactant intactId="EBI-12887458">
        <id>Q9BU79</id>
    </interactant>
    <interactant intactId="EBI-3920694">
        <id>Q9NR31</id>
        <label>SAR1A</label>
    </interactant>
    <organismsDiffer>false</organismsDiffer>
    <experiments>3</experiments>
</comment>
<comment type="interaction">
    <interactant intactId="EBI-12887458">
        <id>Q9BU79</id>
    </interactant>
    <interactant intactId="EBI-17247926">
        <id>Q9NY72</id>
        <label>SCN3B</label>
    </interactant>
    <organismsDiffer>false</organismsDiffer>
    <experiments>3</experiments>
</comment>
<comment type="interaction">
    <interactant intactId="EBI-12887458">
        <id>Q9BU79</id>
    </interactant>
    <interactant intactId="EBI-2855401">
        <id>Q9BY50</id>
        <label>SEC11C</label>
    </interactant>
    <organismsDiffer>false</organismsDiffer>
    <experiments>3</experiments>
</comment>
<comment type="interaction">
    <interactant intactId="EBI-12887458">
        <id>Q9BU79</id>
    </interactant>
    <interactant intactId="EBI-17280858">
        <id>Q8WWF3</id>
        <label>SSMEM1</label>
    </interactant>
    <organismsDiffer>false</organismsDiffer>
    <experiments>3</experiments>
</comment>
<comment type="interaction">
    <interactant intactId="EBI-12887458">
        <id>Q9BU79</id>
    </interactant>
    <interactant intactId="EBI-3922699">
        <id>Q96IK0</id>
        <label>TMEM101</label>
    </interactant>
    <organismsDiffer>false</organismsDiffer>
    <experiments>3</experiments>
</comment>
<comment type="interaction">
    <interactant intactId="EBI-12887458">
        <id>Q9BU79</id>
    </interactant>
    <interactant intactId="EBI-8638294">
        <id>Q9NUH8</id>
        <label>TMEM14B</label>
    </interactant>
    <organismsDiffer>false</organismsDiffer>
    <experiments>3</experiments>
</comment>
<comment type="interaction">
    <interactant intactId="EBI-12887458">
        <id>Q9BU79</id>
    </interactant>
    <interactant intactId="EBI-11722971">
        <id>Q53FP2</id>
        <label>TMEM35A</label>
    </interactant>
    <organismsDiffer>false</organismsDiffer>
    <experiments>3</experiments>
</comment>
<comment type="interaction">
    <interactant intactId="EBI-12887458">
        <id>Q9BU79</id>
    </interactant>
    <interactant intactId="EBI-3923061">
        <id>Q96B21</id>
        <label>TMEM45B</label>
    </interactant>
    <organismsDiffer>false</organismsDiffer>
    <experiments>3</experiments>
</comment>
<comment type="interaction">
    <interactant intactId="EBI-12887458">
        <id>Q9BU79</id>
    </interactant>
    <interactant intactId="EBI-11742770">
        <id>Q96HE8</id>
        <label>TMEM80</label>
    </interactant>
    <organismsDiffer>false</organismsDiffer>
    <experiments>3</experiments>
</comment>
<comment type="interaction">
    <interactant intactId="EBI-12887458">
        <id>Q9BU79</id>
    </interactant>
    <interactant intactId="EBI-12345267">
        <id>O15393-2</id>
        <label>TMPRSS2</label>
    </interactant>
    <organismsDiffer>false</organismsDiffer>
    <experiments>3</experiments>
</comment>
<comment type="interaction">
    <interactant intactId="EBI-12887458">
        <id>Q9BU79</id>
    </interactant>
    <interactant intactId="EBI-3892947">
        <id>Q5T4F4</id>
        <label>ZFYVE27</label>
    </interactant>
    <organismsDiffer>false</organismsDiffer>
    <experiments>3</experiments>
</comment>
<comment type="subcellular location">
    <subcellularLocation>
        <location evidence="4">Membrane</location>
        <topology evidence="4">Multi-pass membrane protein</topology>
    </subcellularLocation>
</comment>
<comment type="tissue specificity">
    <text evidence="2">Widely expressed.</text>
</comment>
<comment type="similarity">
    <text evidence="4">Belongs to the TMEM243 family.</text>
</comment>
<dbReference type="EMBL" id="BT006973">
    <property type="protein sequence ID" value="AAP35619.1"/>
    <property type="molecule type" value="mRNA"/>
</dbReference>
<dbReference type="EMBL" id="AK313794">
    <property type="protein sequence ID" value="BAG36531.1"/>
    <property type="molecule type" value="mRNA"/>
</dbReference>
<dbReference type="EMBL" id="CH236949">
    <property type="protein sequence ID" value="EAL24179.1"/>
    <property type="molecule type" value="Genomic_DNA"/>
</dbReference>
<dbReference type="EMBL" id="CH471091">
    <property type="protein sequence ID" value="EAW76960.1"/>
    <property type="molecule type" value="Genomic_DNA"/>
</dbReference>
<dbReference type="EMBL" id="CH471091">
    <property type="protein sequence ID" value="EAW76961.1"/>
    <property type="molecule type" value="Genomic_DNA"/>
</dbReference>
<dbReference type="EMBL" id="BC002837">
    <property type="protein sequence ID" value="AAH02837.1"/>
    <property type="molecule type" value="mRNA"/>
</dbReference>
<dbReference type="CCDS" id="CCDS5602.1"/>
<dbReference type="RefSeq" id="NP_001316401.1">
    <property type="nucleotide sequence ID" value="NM_001329472.1"/>
</dbReference>
<dbReference type="RefSeq" id="NP_001316402.1">
    <property type="nucleotide sequence ID" value="NM_001329473.2"/>
</dbReference>
<dbReference type="RefSeq" id="NP_001316403.1">
    <property type="nucleotide sequence ID" value="NM_001329474.2"/>
</dbReference>
<dbReference type="RefSeq" id="NP_001316404.1">
    <property type="nucleotide sequence ID" value="NM_001329475.2"/>
</dbReference>
<dbReference type="RefSeq" id="NP_077291.1">
    <property type="nucleotide sequence ID" value="NM_024315.4"/>
</dbReference>
<dbReference type="SMR" id="Q9BU79"/>
<dbReference type="BioGRID" id="122579">
    <property type="interactions" value="47"/>
</dbReference>
<dbReference type="FunCoup" id="Q9BU79">
    <property type="interactions" value="74"/>
</dbReference>
<dbReference type="IntAct" id="Q9BU79">
    <property type="interactions" value="42"/>
</dbReference>
<dbReference type="STRING" id="9606.ENSP00000398083"/>
<dbReference type="iPTMnet" id="Q9BU79"/>
<dbReference type="PhosphoSitePlus" id="Q9BU79"/>
<dbReference type="BioMuta" id="TMEM243"/>
<dbReference type="DMDM" id="38257751"/>
<dbReference type="jPOST" id="Q9BU79"/>
<dbReference type="MassIVE" id="Q9BU79"/>
<dbReference type="PaxDb" id="9606-ENSP00000398083"/>
<dbReference type="PeptideAtlas" id="Q9BU79"/>
<dbReference type="ProteomicsDB" id="79064"/>
<dbReference type="Pumba" id="Q9BU79"/>
<dbReference type="TopDownProteomics" id="Q9BU79"/>
<dbReference type="Antibodypedia" id="15281">
    <property type="antibodies" value="31 antibodies from 9 providers"/>
</dbReference>
<dbReference type="DNASU" id="79161"/>
<dbReference type="Ensembl" id="ENST00000257637.8">
    <property type="protein sequence ID" value="ENSP00000257637.3"/>
    <property type="gene ID" value="ENSG00000135185.12"/>
</dbReference>
<dbReference type="Ensembl" id="ENST00000433078.5">
    <property type="protein sequence ID" value="ENSP00000398083.1"/>
    <property type="gene ID" value="ENSG00000135185.12"/>
</dbReference>
<dbReference type="GeneID" id="79161"/>
<dbReference type="KEGG" id="hsa:79161"/>
<dbReference type="MANE-Select" id="ENST00000257637.8">
    <property type="protein sequence ID" value="ENSP00000257637.3"/>
    <property type="RefSeq nucleotide sequence ID" value="NM_024315.4"/>
    <property type="RefSeq protein sequence ID" value="NP_077291.1"/>
</dbReference>
<dbReference type="UCSC" id="uc003uio.4">
    <property type="organism name" value="human"/>
</dbReference>
<dbReference type="AGR" id="HGNC:21707"/>
<dbReference type="CTD" id="79161"/>
<dbReference type="DisGeNET" id="79161"/>
<dbReference type="GeneCards" id="TMEM243"/>
<dbReference type="HGNC" id="HGNC:21707">
    <property type="gene designation" value="TMEM243"/>
</dbReference>
<dbReference type="HPA" id="ENSG00000135185">
    <property type="expression patterns" value="Low tissue specificity"/>
</dbReference>
<dbReference type="MIM" id="616993">
    <property type="type" value="gene"/>
</dbReference>
<dbReference type="neXtProt" id="NX_Q9BU79"/>
<dbReference type="OpenTargets" id="ENSG00000135185"/>
<dbReference type="PharmGKB" id="PA134985688"/>
<dbReference type="VEuPathDB" id="HostDB:ENSG00000135185"/>
<dbReference type="eggNOG" id="ENOG502RZ1F">
    <property type="taxonomic scope" value="Eukaryota"/>
</dbReference>
<dbReference type="GeneTree" id="ENSGT00390000010221"/>
<dbReference type="HOGENOM" id="CLU_148752_0_0_1"/>
<dbReference type="InParanoid" id="Q9BU79"/>
<dbReference type="OMA" id="HAMLIHW"/>
<dbReference type="OrthoDB" id="17800at2759"/>
<dbReference type="PAN-GO" id="Q9BU79">
    <property type="GO annotations" value="0 GO annotations based on evolutionary models"/>
</dbReference>
<dbReference type="PhylomeDB" id="Q9BU79"/>
<dbReference type="TreeFam" id="TF329078"/>
<dbReference type="PathwayCommons" id="Q9BU79"/>
<dbReference type="SignaLink" id="Q9BU79"/>
<dbReference type="BioGRID-ORCS" id="79161">
    <property type="hits" value="16 hits in 1155 CRISPR screens"/>
</dbReference>
<dbReference type="ChiTaRS" id="TMEM243">
    <property type="organism name" value="human"/>
</dbReference>
<dbReference type="GenomeRNAi" id="79161"/>
<dbReference type="Pharos" id="Q9BU79">
    <property type="development level" value="Tdark"/>
</dbReference>
<dbReference type="PRO" id="PR:Q9BU79"/>
<dbReference type="Proteomes" id="UP000005640">
    <property type="component" value="Chromosome 7"/>
</dbReference>
<dbReference type="RNAct" id="Q9BU79">
    <property type="molecule type" value="protein"/>
</dbReference>
<dbReference type="Bgee" id="ENSG00000135185">
    <property type="expression patterns" value="Expressed in left lobe of thyroid gland and 196 other cell types or tissues"/>
</dbReference>
<dbReference type="ExpressionAtlas" id="Q9BU79">
    <property type="expression patterns" value="baseline and differential"/>
</dbReference>
<dbReference type="GO" id="GO:0016020">
    <property type="term" value="C:membrane"/>
    <property type="evidence" value="ECO:0007669"/>
    <property type="project" value="UniProtKB-SubCell"/>
</dbReference>
<dbReference type="InterPro" id="IPR022564">
    <property type="entry name" value="DUF2678"/>
</dbReference>
<dbReference type="PANTHER" id="PTHR28603">
    <property type="entry name" value="TRANSMEMBRANE PROTEIN 243"/>
    <property type="match status" value="1"/>
</dbReference>
<dbReference type="PANTHER" id="PTHR28603:SF1">
    <property type="entry name" value="TRANSMEMBRANE PROTEIN 243"/>
    <property type="match status" value="1"/>
</dbReference>
<dbReference type="Pfam" id="PF10856">
    <property type="entry name" value="DUF2678"/>
    <property type="match status" value="1"/>
</dbReference>
<keyword id="KW-0007">Acetylation</keyword>
<keyword id="KW-0472">Membrane</keyword>
<keyword id="KW-1267">Proteomics identification</keyword>
<keyword id="KW-1185">Reference proteome</keyword>
<keyword id="KW-0812">Transmembrane</keyword>
<keyword id="KW-1133">Transmembrane helix</keyword>
<accession>Q9BU79</accession>
<accession>A4D1C6</accession>
<accession>B2R9I4</accession>
<accession>D6W5P1</accession>
<feature type="chain" id="PRO_0000089579" description="Transmembrane protein 243">
    <location>
        <begin position="1"/>
        <end position="118"/>
    </location>
</feature>
<feature type="transmembrane region" description="Helical" evidence="1">
    <location>
        <begin position="32"/>
        <end position="52"/>
    </location>
</feature>
<feature type="transmembrane region" description="Helical" evidence="1">
    <location>
        <begin position="62"/>
        <end position="82"/>
    </location>
</feature>
<feature type="transmembrane region" description="Helical" evidence="1">
    <location>
        <begin position="94"/>
        <end position="114"/>
    </location>
</feature>
<feature type="modified residue" description="N-acetylmethionine" evidence="5">
    <location>
        <position position="1"/>
    </location>
</feature>
<evidence type="ECO:0000255" key="1"/>
<evidence type="ECO:0000269" key="2">
    <source>
    </source>
</evidence>
<evidence type="ECO:0000303" key="3">
    <source>
    </source>
</evidence>
<evidence type="ECO:0000305" key="4"/>
<evidence type="ECO:0007744" key="5">
    <source>
    </source>
</evidence>
<organism>
    <name type="scientific">Homo sapiens</name>
    <name type="common">Human</name>
    <dbReference type="NCBI Taxonomy" id="9606"/>
    <lineage>
        <taxon>Eukaryota</taxon>
        <taxon>Metazoa</taxon>
        <taxon>Chordata</taxon>
        <taxon>Craniata</taxon>
        <taxon>Vertebrata</taxon>
        <taxon>Euteleostomi</taxon>
        <taxon>Mammalia</taxon>
        <taxon>Eutheria</taxon>
        <taxon>Euarchontoglires</taxon>
        <taxon>Primates</taxon>
        <taxon>Haplorrhini</taxon>
        <taxon>Catarrhini</taxon>
        <taxon>Hominidae</taxon>
        <taxon>Homo</taxon>
    </lineage>
</organism>
<proteinExistence type="evidence at protein level"/>
<reference key="1">
    <citation type="submission" date="2003-05" db="EMBL/GenBank/DDBJ databases">
        <title>Cloning of human full-length CDSs in BD Creator(TM) system donor vector.</title>
        <authorList>
            <person name="Kalnine N."/>
            <person name="Chen X."/>
            <person name="Rolfs A."/>
            <person name="Halleck A."/>
            <person name="Hines L."/>
            <person name="Eisenstein S."/>
            <person name="Koundinya M."/>
            <person name="Raphael J."/>
            <person name="Moreira D."/>
            <person name="Kelley T."/>
            <person name="LaBaer J."/>
            <person name="Lin Y."/>
            <person name="Phelan M."/>
            <person name="Farmer A."/>
        </authorList>
    </citation>
    <scope>NUCLEOTIDE SEQUENCE [LARGE SCALE MRNA]</scope>
</reference>
<reference key="2">
    <citation type="journal article" date="2004" name="Nat. Genet.">
        <title>Complete sequencing and characterization of 21,243 full-length human cDNAs.</title>
        <authorList>
            <person name="Ota T."/>
            <person name="Suzuki Y."/>
            <person name="Nishikawa T."/>
            <person name="Otsuki T."/>
            <person name="Sugiyama T."/>
            <person name="Irie R."/>
            <person name="Wakamatsu A."/>
            <person name="Hayashi K."/>
            <person name="Sato H."/>
            <person name="Nagai K."/>
            <person name="Kimura K."/>
            <person name="Makita H."/>
            <person name="Sekine M."/>
            <person name="Obayashi M."/>
            <person name="Nishi T."/>
            <person name="Shibahara T."/>
            <person name="Tanaka T."/>
            <person name="Ishii S."/>
            <person name="Yamamoto J."/>
            <person name="Saito K."/>
            <person name="Kawai Y."/>
            <person name="Isono Y."/>
            <person name="Nakamura Y."/>
            <person name="Nagahari K."/>
            <person name="Murakami K."/>
            <person name="Yasuda T."/>
            <person name="Iwayanagi T."/>
            <person name="Wagatsuma M."/>
            <person name="Shiratori A."/>
            <person name="Sudo H."/>
            <person name="Hosoiri T."/>
            <person name="Kaku Y."/>
            <person name="Kodaira H."/>
            <person name="Kondo H."/>
            <person name="Sugawara M."/>
            <person name="Takahashi M."/>
            <person name="Kanda K."/>
            <person name="Yokoi T."/>
            <person name="Furuya T."/>
            <person name="Kikkawa E."/>
            <person name="Omura Y."/>
            <person name="Abe K."/>
            <person name="Kamihara K."/>
            <person name="Katsuta N."/>
            <person name="Sato K."/>
            <person name="Tanikawa M."/>
            <person name="Yamazaki M."/>
            <person name="Ninomiya K."/>
            <person name="Ishibashi T."/>
            <person name="Yamashita H."/>
            <person name="Murakawa K."/>
            <person name="Fujimori K."/>
            <person name="Tanai H."/>
            <person name="Kimata M."/>
            <person name="Watanabe M."/>
            <person name="Hiraoka S."/>
            <person name="Chiba Y."/>
            <person name="Ishida S."/>
            <person name="Ono Y."/>
            <person name="Takiguchi S."/>
            <person name="Watanabe S."/>
            <person name="Yosida M."/>
            <person name="Hotuta T."/>
            <person name="Kusano J."/>
            <person name="Kanehori K."/>
            <person name="Takahashi-Fujii A."/>
            <person name="Hara H."/>
            <person name="Tanase T.-O."/>
            <person name="Nomura Y."/>
            <person name="Togiya S."/>
            <person name="Komai F."/>
            <person name="Hara R."/>
            <person name="Takeuchi K."/>
            <person name="Arita M."/>
            <person name="Imose N."/>
            <person name="Musashino K."/>
            <person name="Yuuki H."/>
            <person name="Oshima A."/>
            <person name="Sasaki N."/>
            <person name="Aotsuka S."/>
            <person name="Yoshikawa Y."/>
            <person name="Matsunawa H."/>
            <person name="Ichihara T."/>
            <person name="Shiohata N."/>
            <person name="Sano S."/>
            <person name="Moriya S."/>
            <person name="Momiyama H."/>
            <person name="Satoh N."/>
            <person name="Takami S."/>
            <person name="Terashima Y."/>
            <person name="Suzuki O."/>
            <person name="Nakagawa S."/>
            <person name="Senoh A."/>
            <person name="Mizoguchi H."/>
            <person name="Goto Y."/>
            <person name="Shimizu F."/>
            <person name="Wakebe H."/>
            <person name="Hishigaki H."/>
            <person name="Watanabe T."/>
            <person name="Sugiyama A."/>
            <person name="Takemoto M."/>
            <person name="Kawakami B."/>
            <person name="Yamazaki M."/>
            <person name="Watanabe K."/>
            <person name="Kumagai A."/>
            <person name="Itakura S."/>
            <person name="Fukuzumi Y."/>
            <person name="Fujimori Y."/>
            <person name="Komiyama M."/>
            <person name="Tashiro H."/>
            <person name="Tanigami A."/>
            <person name="Fujiwara T."/>
            <person name="Ono T."/>
            <person name="Yamada K."/>
            <person name="Fujii Y."/>
            <person name="Ozaki K."/>
            <person name="Hirao M."/>
            <person name="Ohmori Y."/>
            <person name="Kawabata A."/>
            <person name="Hikiji T."/>
            <person name="Kobatake N."/>
            <person name="Inagaki H."/>
            <person name="Ikema Y."/>
            <person name="Okamoto S."/>
            <person name="Okitani R."/>
            <person name="Kawakami T."/>
            <person name="Noguchi S."/>
            <person name="Itoh T."/>
            <person name="Shigeta K."/>
            <person name="Senba T."/>
            <person name="Matsumura K."/>
            <person name="Nakajima Y."/>
            <person name="Mizuno T."/>
            <person name="Morinaga M."/>
            <person name="Sasaki M."/>
            <person name="Togashi T."/>
            <person name="Oyama M."/>
            <person name="Hata H."/>
            <person name="Watanabe M."/>
            <person name="Komatsu T."/>
            <person name="Mizushima-Sugano J."/>
            <person name="Satoh T."/>
            <person name="Shirai Y."/>
            <person name="Takahashi Y."/>
            <person name="Nakagawa K."/>
            <person name="Okumura K."/>
            <person name="Nagase T."/>
            <person name="Nomura N."/>
            <person name="Kikuchi H."/>
            <person name="Masuho Y."/>
            <person name="Yamashita R."/>
            <person name="Nakai K."/>
            <person name="Yada T."/>
            <person name="Nakamura Y."/>
            <person name="Ohara O."/>
            <person name="Isogai T."/>
            <person name="Sugano S."/>
        </authorList>
    </citation>
    <scope>NUCLEOTIDE SEQUENCE [LARGE SCALE MRNA]</scope>
    <source>
        <tissue>Trachea</tissue>
    </source>
</reference>
<reference key="3">
    <citation type="journal article" date="2003" name="Science">
        <title>Human chromosome 7: DNA sequence and biology.</title>
        <authorList>
            <person name="Scherer S.W."/>
            <person name="Cheung J."/>
            <person name="MacDonald J.R."/>
            <person name="Osborne L.R."/>
            <person name="Nakabayashi K."/>
            <person name="Herbrick J.-A."/>
            <person name="Carson A.R."/>
            <person name="Parker-Katiraee L."/>
            <person name="Skaug J."/>
            <person name="Khaja R."/>
            <person name="Zhang J."/>
            <person name="Hudek A.K."/>
            <person name="Li M."/>
            <person name="Haddad M."/>
            <person name="Duggan G.E."/>
            <person name="Fernandez B.A."/>
            <person name="Kanematsu E."/>
            <person name="Gentles S."/>
            <person name="Christopoulos C.C."/>
            <person name="Choufani S."/>
            <person name="Kwasnicka D."/>
            <person name="Zheng X.H."/>
            <person name="Lai Z."/>
            <person name="Nusskern D.R."/>
            <person name="Zhang Q."/>
            <person name="Gu Z."/>
            <person name="Lu F."/>
            <person name="Zeesman S."/>
            <person name="Nowaczyk M.J."/>
            <person name="Teshima I."/>
            <person name="Chitayat D."/>
            <person name="Shuman C."/>
            <person name="Weksberg R."/>
            <person name="Zackai E.H."/>
            <person name="Grebe T.A."/>
            <person name="Cox S.R."/>
            <person name="Kirkpatrick S.J."/>
            <person name="Rahman N."/>
            <person name="Friedman J.M."/>
            <person name="Heng H.H.Q."/>
            <person name="Pelicci P.G."/>
            <person name="Lo-Coco F."/>
            <person name="Belloni E."/>
            <person name="Shaffer L.G."/>
            <person name="Pober B."/>
            <person name="Morton C.C."/>
            <person name="Gusella J.F."/>
            <person name="Bruns G.A.P."/>
            <person name="Korf B.R."/>
            <person name="Quade B.J."/>
            <person name="Ligon A.H."/>
            <person name="Ferguson H."/>
            <person name="Higgins A.W."/>
            <person name="Leach N.T."/>
            <person name="Herrick S.R."/>
            <person name="Lemyre E."/>
            <person name="Farra C.G."/>
            <person name="Kim H.-G."/>
            <person name="Summers A.M."/>
            <person name="Gripp K.W."/>
            <person name="Roberts W."/>
            <person name="Szatmari P."/>
            <person name="Winsor E.J.T."/>
            <person name="Grzeschik K.-H."/>
            <person name="Teebi A."/>
            <person name="Minassian B.A."/>
            <person name="Kere J."/>
            <person name="Armengol L."/>
            <person name="Pujana M.A."/>
            <person name="Estivill X."/>
            <person name="Wilson M.D."/>
            <person name="Koop B.F."/>
            <person name="Tosi S."/>
            <person name="Moore G.E."/>
            <person name="Boright A.P."/>
            <person name="Zlotorynski E."/>
            <person name="Kerem B."/>
            <person name="Kroisel P.M."/>
            <person name="Petek E."/>
            <person name="Oscier D.G."/>
            <person name="Mould S.J."/>
            <person name="Doehner H."/>
            <person name="Doehner K."/>
            <person name="Rommens J.M."/>
            <person name="Vincent J.B."/>
            <person name="Venter J.C."/>
            <person name="Li P.W."/>
            <person name="Mural R.J."/>
            <person name="Adams M.D."/>
            <person name="Tsui L.-C."/>
        </authorList>
    </citation>
    <scope>NUCLEOTIDE SEQUENCE [LARGE SCALE GENOMIC DNA]</scope>
</reference>
<reference key="4">
    <citation type="submission" date="2005-09" db="EMBL/GenBank/DDBJ databases">
        <authorList>
            <person name="Mural R.J."/>
            <person name="Istrail S."/>
            <person name="Sutton G.G."/>
            <person name="Florea L."/>
            <person name="Halpern A.L."/>
            <person name="Mobarry C.M."/>
            <person name="Lippert R."/>
            <person name="Walenz B."/>
            <person name="Shatkay H."/>
            <person name="Dew I."/>
            <person name="Miller J.R."/>
            <person name="Flanigan M.J."/>
            <person name="Edwards N.J."/>
            <person name="Bolanos R."/>
            <person name="Fasulo D."/>
            <person name="Halldorsson B.V."/>
            <person name="Hannenhalli S."/>
            <person name="Turner R."/>
            <person name="Yooseph S."/>
            <person name="Lu F."/>
            <person name="Nusskern D.R."/>
            <person name="Shue B.C."/>
            <person name="Zheng X.H."/>
            <person name="Zhong F."/>
            <person name="Delcher A.L."/>
            <person name="Huson D.H."/>
            <person name="Kravitz S.A."/>
            <person name="Mouchard L."/>
            <person name="Reinert K."/>
            <person name="Remington K.A."/>
            <person name="Clark A.G."/>
            <person name="Waterman M.S."/>
            <person name="Eichler E.E."/>
            <person name="Adams M.D."/>
            <person name="Hunkapiller M.W."/>
            <person name="Myers E.W."/>
            <person name="Venter J.C."/>
        </authorList>
    </citation>
    <scope>NUCLEOTIDE SEQUENCE [LARGE SCALE GENOMIC DNA]</scope>
</reference>
<reference key="5">
    <citation type="journal article" date="2004" name="Genome Res.">
        <title>The status, quality, and expansion of the NIH full-length cDNA project: the Mammalian Gene Collection (MGC).</title>
        <authorList>
            <consortium name="The MGC Project Team"/>
        </authorList>
    </citation>
    <scope>NUCLEOTIDE SEQUENCE [LARGE SCALE MRNA]</scope>
    <source>
        <tissue>Lymph</tissue>
    </source>
</reference>
<reference key="6">
    <citation type="journal article" date="2004" name="Gene">
        <title>MM-TRAG (MGC4175), a novel intracellular mitochondrial protein, is associated with the taxol- and doxorubicin-resistant phenotype in human cancer cell lines.</title>
        <authorList>
            <person name="Duan Z."/>
            <person name="Brakora K.A."/>
            <person name="Seiden M.V."/>
        </authorList>
    </citation>
    <scope>TISSUE SPECIFICITY</scope>
</reference>
<reference key="7">
    <citation type="journal article" date="2012" name="Proc. Natl. Acad. Sci. U.S.A.">
        <title>N-terminal acetylome analyses and functional insights of the N-terminal acetyltransferase NatB.</title>
        <authorList>
            <person name="Van Damme P."/>
            <person name="Lasa M."/>
            <person name="Polevoda B."/>
            <person name="Gazquez C."/>
            <person name="Elosegui-Artola A."/>
            <person name="Kim D.S."/>
            <person name="De Juan-Pardo E."/>
            <person name="Demeyer K."/>
            <person name="Hole K."/>
            <person name="Larrea E."/>
            <person name="Timmerman E."/>
            <person name="Prieto J."/>
            <person name="Arnesen T."/>
            <person name="Sherman F."/>
            <person name="Gevaert K."/>
            <person name="Aldabe R."/>
        </authorList>
    </citation>
    <scope>ACETYLATION [LARGE SCALE ANALYSIS] AT MET-1</scope>
    <scope>IDENTIFICATION BY MASS SPECTROMETRY [LARGE SCALE ANALYSIS]</scope>
</reference>
<protein>
    <recommendedName>
        <fullName>Transmembrane protein 243</fullName>
    </recommendedName>
    <alternativeName>
        <fullName evidence="3">MDR1- and mitochondrial taxol resistance-associated protein</fullName>
        <shortName evidence="3">MM-TRAG</shortName>
    </alternativeName>
</protein>
<sequence>MEDFATRTYGTSGLDNRPLFGETSAKDRIINLVVGSLTSLLILVTLISAFVFPQLPPKPLNIFFAVCISLSSITACILIYWYRQGDLEPKFRKLIYYIIFSIIMLCICANLYFHDVGR</sequence>
<gene>
    <name type="primary">TMEM243</name>
    <name type="synonym">C7orf23</name>
</gene>
<name>TM243_HUMAN</name>